<keyword id="KW-0413">Isomerase</keyword>
<keyword id="KW-1017">Isopeptide bond</keyword>
<keyword id="KW-0539">Nucleus</keyword>
<keyword id="KW-0597">Phosphoprotein</keyword>
<keyword id="KW-1185">Reference proteome</keyword>
<keyword id="KW-0694">RNA-binding</keyword>
<keyword id="KW-0697">Rotamase</keyword>
<keyword id="KW-0832">Ubl conjugation</keyword>
<evidence type="ECO:0000250" key="1"/>
<evidence type="ECO:0000250" key="2">
    <source>
        <dbReference type="UniProtKB" id="Q8WUA2"/>
    </source>
</evidence>
<evidence type="ECO:0000255" key="3">
    <source>
        <dbReference type="PROSITE-ProRule" id="PRU00156"/>
    </source>
</evidence>
<evidence type="ECO:0000255" key="4">
    <source>
        <dbReference type="PROSITE-ProRule" id="PRU00176"/>
    </source>
</evidence>
<evidence type="ECO:0000256" key="5">
    <source>
        <dbReference type="SAM" id="MobiDB-lite"/>
    </source>
</evidence>
<evidence type="ECO:0000305" key="6"/>
<evidence type="ECO:0007744" key="7">
    <source>
    </source>
</evidence>
<sequence>MAVLLETTLGDVVIDLYTEERPRACLNFLKLCKIKYYNYCLIHNVQRDFIIQTGDPTGTGRGGESIFGQLYGDQASFFEAEKVPRIKHKKKGTVSMVNNGSDQHGSQFLITTGENLDYLDGVHTVFGEVTEGMDIVKKINETFVDKDFVPYQDIRINHTVILDDPFDDPPDLLIPDRSPEPTKEQLDSGRIGADEEIDDFKGRSAEEVEEIKAEKEAKTQAILLEMVGDLPDADIKPPENVLFVCKLNPVTTDEDLEIIFSRFGPIRSCEVIRDWKTGESLCYAFIEFEKEEDCEKAFFKMDNVLIDDRRIHVDFSQSVAKVKWKGKGGKYTKSDFKEYEKEQDKPANLVLKEKVKPKQDAKYDLILDEQGEDSKSSHSHTSKKHKKKTRHCSEEKEDEEYMPIKNPNQDIYREMGFGHYEEEESCWEKQKNEKRDRRQNRSRSRSRERDGHYSNSHKPKYQTEPYERERSRKRDRSRSPKKSKAKEKSKYR</sequence>
<feature type="chain" id="PRO_0000233053" description="Peptidyl-prolyl cis-trans isomerase-like 4">
    <location>
        <begin position="1"/>
        <end position="492"/>
    </location>
</feature>
<feature type="domain" description="PPIase cyclophilin-type" evidence="3">
    <location>
        <begin position="1"/>
        <end position="161"/>
    </location>
</feature>
<feature type="domain" description="RRM" evidence="4">
    <location>
        <begin position="240"/>
        <end position="318"/>
    </location>
</feature>
<feature type="region of interest" description="Disordered" evidence="5">
    <location>
        <begin position="167"/>
        <end position="188"/>
    </location>
</feature>
<feature type="region of interest" description="Disordered" evidence="5">
    <location>
        <begin position="368"/>
        <end position="409"/>
    </location>
</feature>
<feature type="region of interest" description="Disordered" evidence="5">
    <location>
        <begin position="423"/>
        <end position="492"/>
    </location>
</feature>
<feature type="compositionally biased region" description="Basic and acidic residues" evidence="5">
    <location>
        <begin position="177"/>
        <end position="187"/>
    </location>
</feature>
<feature type="compositionally biased region" description="Basic residues" evidence="5">
    <location>
        <begin position="377"/>
        <end position="390"/>
    </location>
</feature>
<feature type="compositionally biased region" description="Basic and acidic residues" evidence="5">
    <location>
        <begin position="426"/>
        <end position="436"/>
    </location>
</feature>
<feature type="compositionally biased region" description="Basic residues" evidence="5">
    <location>
        <begin position="473"/>
        <end position="485"/>
    </location>
</feature>
<feature type="modified residue" description="Phosphoserine" evidence="7">
    <location>
        <position position="178"/>
    </location>
</feature>
<feature type="modified residue" description="Phosphothreonine" evidence="2">
    <location>
        <position position="182"/>
    </location>
</feature>
<feature type="modified residue" description="Phosphoserine" evidence="7">
    <location>
        <position position="393"/>
    </location>
</feature>
<feature type="modified residue" description="Phosphoserine" evidence="2">
    <location>
        <position position="471"/>
    </location>
</feature>
<feature type="cross-link" description="Glycyl lysine isopeptide (Lys-Gly) (interchain with G-Cter in SUMO2)" evidence="2">
    <location>
        <position position="201"/>
    </location>
</feature>
<feature type="cross-link" description="Glycyl lysine isopeptide (Lys-Gly) (interchain with G-Cter in SUMO2)" evidence="2">
    <location>
        <position position="212"/>
    </location>
</feature>
<feature type="cross-link" description="Glycyl lysine isopeptide (Lys-Gly) (interchain with G-Cter in SUMO2)" evidence="2">
    <location>
        <position position="218"/>
    </location>
</feature>
<feature type="cross-link" description="Glycyl lysine isopeptide (Lys-Gly) (interchain with G-Cter in SUMO2)" evidence="2">
    <location>
        <position position="321"/>
    </location>
</feature>
<feature type="cross-link" description="Glycyl lysine isopeptide (Lys-Gly) (interchain with G-Cter in SUMO2)" evidence="2">
    <location>
        <position position="362"/>
    </location>
</feature>
<feature type="cross-link" description="Glycyl lysine isopeptide (Lys-Gly) (interchain with G-Cter in SUMO2)" evidence="2">
    <location>
        <position position="405"/>
    </location>
</feature>
<feature type="cross-link" description="Glycyl lysine isopeptide (Lys-Gly) (interchain with G-Cter in SUMO2)" evidence="2">
    <location>
        <position position="460"/>
    </location>
</feature>
<feature type="sequence conflict" description="In Ref. 1; BAB29330." evidence="6" ref="1">
    <original>D</original>
    <variation>E</variation>
    <location>
        <position position="234"/>
    </location>
</feature>
<feature type="sequence conflict" description="In Ref. 1; BAB29330." evidence="6" ref="1">
    <original>I</original>
    <variation>L</variation>
    <location>
        <position position="258"/>
    </location>
</feature>
<gene>
    <name type="primary">Ppil4</name>
</gene>
<organism>
    <name type="scientific">Mus musculus</name>
    <name type="common">Mouse</name>
    <dbReference type="NCBI Taxonomy" id="10090"/>
    <lineage>
        <taxon>Eukaryota</taxon>
        <taxon>Metazoa</taxon>
        <taxon>Chordata</taxon>
        <taxon>Craniata</taxon>
        <taxon>Vertebrata</taxon>
        <taxon>Euteleostomi</taxon>
        <taxon>Mammalia</taxon>
        <taxon>Eutheria</taxon>
        <taxon>Euarchontoglires</taxon>
        <taxon>Glires</taxon>
        <taxon>Rodentia</taxon>
        <taxon>Myomorpha</taxon>
        <taxon>Muroidea</taxon>
        <taxon>Muridae</taxon>
        <taxon>Murinae</taxon>
        <taxon>Mus</taxon>
        <taxon>Mus</taxon>
    </lineage>
</organism>
<protein>
    <recommendedName>
        <fullName>Peptidyl-prolyl cis-trans isomerase-like 4</fullName>
        <shortName>PPIase</shortName>
        <ecNumber>5.2.1.8</ecNumber>
    </recommendedName>
    <alternativeName>
        <fullName>Cyclophilin-like protein PPIL4</fullName>
    </alternativeName>
    <alternativeName>
        <fullName>Rotamase PPIL4</fullName>
    </alternativeName>
</protein>
<reference key="1">
    <citation type="journal article" date="2005" name="Science">
        <title>The transcriptional landscape of the mammalian genome.</title>
        <authorList>
            <person name="Carninci P."/>
            <person name="Kasukawa T."/>
            <person name="Katayama S."/>
            <person name="Gough J."/>
            <person name="Frith M.C."/>
            <person name="Maeda N."/>
            <person name="Oyama R."/>
            <person name="Ravasi T."/>
            <person name="Lenhard B."/>
            <person name="Wells C."/>
            <person name="Kodzius R."/>
            <person name="Shimokawa K."/>
            <person name="Bajic V.B."/>
            <person name="Brenner S.E."/>
            <person name="Batalov S."/>
            <person name="Forrest A.R."/>
            <person name="Zavolan M."/>
            <person name="Davis M.J."/>
            <person name="Wilming L.G."/>
            <person name="Aidinis V."/>
            <person name="Allen J.E."/>
            <person name="Ambesi-Impiombato A."/>
            <person name="Apweiler R."/>
            <person name="Aturaliya R.N."/>
            <person name="Bailey T.L."/>
            <person name="Bansal M."/>
            <person name="Baxter L."/>
            <person name="Beisel K.W."/>
            <person name="Bersano T."/>
            <person name="Bono H."/>
            <person name="Chalk A.M."/>
            <person name="Chiu K.P."/>
            <person name="Choudhary V."/>
            <person name="Christoffels A."/>
            <person name="Clutterbuck D.R."/>
            <person name="Crowe M.L."/>
            <person name="Dalla E."/>
            <person name="Dalrymple B.P."/>
            <person name="de Bono B."/>
            <person name="Della Gatta G."/>
            <person name="di Bernardo D."/>
            <person name="Down T."/>
            <person name="Engstrom P."/>
            <person name="Fagiolini M."/>
            <person name="Faulkner G."/>
            <person name="Fletcher C.F."/>
            <person name="Fukushima T."/>
            <person name="Furuno M."/>
            <person name="Futaki S."/>
            <person name="Gariboldi M."/>
            <person name="Georgii-Hemming P."/>
            <person name="Gingeras T.R."/>
            <person name="Gojobori T."/>
            <person name="Green R.E."/>
            <person name="Gustincich S."/>
            <person name="Harbers M."/>
            <person name="Hayashi Y."/>
            <person name="Hensch T.K."/>
            <person name="Hirokawa N."/>
            <person name="Hill D."/>
            <person name="Huminiecki L."/>
            <person name="Iacono M."/>
            <person name="Ikeo K."/>
            <person name="Iwama A."/>
            <person name="Ishikawa T."/>
            <person name="Jakt M."/>
            <person name="Kanapin A."/>
            <person name="Katoh M."/>
            <person name="Kawasawa Y."/>
            <person name="Kelso J."/>
            <person name="Kitamura H."/>
            <person name="Kitano H."/>
            <person name="Kollias G."/>
            <person name="Krishnan S.P."/>
            <person name="Kruger A."/>
            <person name="Kummerfeld S.K."/>
            <person name="Kurochkin I.V."/>
            <person name="Lareau L.F."/>
            <person name="Lazarevic D."/>
            <person name="Lipovich L."/>
            <person name="Liu J."/>
            <person name="Liuni S."/>
            <person name="McWilliam S."/>
            <person name="Madan Babu M."/>
            <person name="Madera M."/>
            <person name="Marchionni L."/>
            <person name="Matsuda H."/>
            <person name="Matsuzawa S."/>
            <person name="Miki H."/>
            <person name="Mignone F."/>
            <person name="Miyake S."/>
            <person name="Morris K."/>
            <person name="Mottagui-Tabar S."/>
            <person name="Mulder N."/>
            <person name="Nakano N."/>
            <person name="Nakauchi H."/>
            <person name="Ng P."/>
            <person name="Nilsson R."/>
            <person name="Nishiguchi S."/>
            <person name="Nishikawa S."/>
            <person name="Nori F."/>
            <person name="Ohara O."/>
            <person name="Okazaki Y."/>
            <person name="Orlando V."/>
            <person name="Pang K.C."/>
            <person name="Pavan W.J."/>
            <person name="Pavesi G."/>
            <person name="Pesole G."/>
            <person name="Petrovsky N."/>
            <person name="Piazza S."/>
            <person name="Reed J."/>
            <person name="Reid J.F."/>
            <person name="Ring B.Z."/>
            <person name="Ringwald M."/>
            <person name="Rost B."/>
            <person name="Ruan Y."/>
            <person name="Salzberg S.L."/>
            <person name="Sandelin A."/>
            <person name="Schneider C."/>
            <person name="Schoenbach C."/>
            <person name="Sekiguchi K."/>
            <person name="Semple C.A."/>
            <person name="Seno S."/>
            <person name="Sessa L."/>
            <person name="Sheng Y."/>
            <person name="Shibata Y."/>
            <person name="Shimada H."/>
            <person name="Shimada K."/>
            <person name="Silva D."/>
            <person name="Sinclair B."/>
            <person name="Sperling S."/>
            <person name="Stupka E."/>
            <person name="Sugiura K."/>
            <person name="Sultana R."/>
            <person name="Takenaka Y."/>
            <person name="Taki K."/>
            <person name="Tammoja K."/>
            <person name="Tan S.L."/>
            <person name="Tang S."/>
            <person name="Taylor M.S."/>
            <person name="Tegner J."/>
            <person name="Teichmann S.A."/>
            <person name="Ueda H.R."/>
            <person name="van Nimwegen E."/>
            <person name="Verardo R."/>
            <person name="Wei C.L."/>
            <person name="Yagi K."/>
            <person name="Yamanishi H."/>
            <person name="Zabarovsky E."/>
            <person name="Zhu S."/>
            <person name="Zimmer A."/>
            <person name="Hide W."/>
            <person name="Bult C."/>
            <person name="Grimmond S.M."/>
            <person name="Teasdale R.D."/>
            <person name="Liu E.T."/>
            <person name="Brusic V."/>
            <person name="Quackenbush J."/>
            <person name="Wahlestedt C."/>
            <person name="Mattick J.S."/>
            <person name="Hume D.A."/>
            <person name="Kai C."/>
            <person name="Sasaki D."/>
            <person name="Tomaru Y."/>
            <person name="Fukuda S."/>
            <person name="Kanamori-Katayama M."/>
            <person name="Suzuki M."/>
            <person name="Aoki J."/>
            <person name="Arakawa T."/>
            <person name="Iida J."/>
            <person name="Imamura K."/>
            <person name="Itoh M."/>
            <person name="Kato T."/>
            <person name="Kawaji H."/>
            <person name="Kawagashira N."/>
            <person name="Kawashima T."/>
            <person name="Kojima M."/>
            <person name="Kondo S."/>
            <person name="Konno H."/>
            <person name="Nakano K."/>
            <person name="Ninomiya N."/>
            <person name="Nishio T."/>
            <person name="Okada M."/>
            <person name="Plessy C."/>
            <person name="Shibata K."/>
            <person name="Shiraki T."/>
            <person name="Suzuki S."/>
            <person name="Tagami M."/>
            <person name="Waki K."/>
            <person name="Watahiki A."/>
            <person name="Okamura-Oho Y."/>
            <person name="Suzuki H."/>
            <person name="Kawai J."/>
            <person name="Hayashizaki Y."/>
        </authorList>
    </citation>
    <scope>NUCLEOTIDE SEQUENCE [LARGE SCALE MRNA]</scope>
    <source>
        <strain>C57BL/6J</strain>
        <tissue>Embryo</tissue>
    </source>
</reference>
<reference key="2">
    <citation type="journal article" date="2004" name="Genome Res.">
        <title>The status, quality, and expansion of the NIH full-length cDNA project: the Mammalian Gene Collection (MGC).</title>
        <authorList>
            <consortium name="The MGC Project Team"/>
        </authorList>
    </citation>
    <scope>NUCLEOTIDE SEQUENCE [LARGE SCALE MRNA]</scope>
    <source>
        <strain>C57BL/6J</strain>
        <tissue>Head</tissue>
    </source>
</reference>
<reference key="3">
    <citation type="journal article" date="2006" name="Mol. Cell. Proteomics">
        <title>Comprehensive identification of phosphorylation sites in postsynaptic density preparations.</title>
        <authorList>
            <person name="Trinidad J.C."/>
            <person name="Specht C.G."/>
            <person name="Thalhammer A."/>
            <person name="Schoepfer R."/>
            <person name="Burlingame A.L."/>
        </authorList>
    </citation>
    <scope>IDENTIFICATION BY MASS SPECTROMETRY [LARGE SCALE ANALYSIS]</scope>
    <source>
        <tissue>Brain</tissue>
    </source>
</reference>
<reference key="4">
    <citation type="journal article" date="2009" name="Immunity">
        <title>The phagosomal proteome in interferon-gamma-activated macrophages.</title>
        <authorList>
            <person name="Trost M."/>
            <person name="English L."/>
            <person name="Lemieux S."/>
            <person name="Courcelles M."/>
            <person name="Desjardins M."/>
            <person name="Thibault P."/>
        </authorList>
    </citation>
    <scope>IDENTIFICATION BY MASS SPECTROMETRY [LARGE SCALE ANALYSIS]</scope>
</reference>
<reference key="5">
    <citation type="journal article" date="2010" name="Cell">
        <title>A tissue-specific atlas of mouse protein phosphorylation and expression.</title>
        <authorList>
            <person name="Huttlin E.L."/>
            <person name="Jedrychowski M.P."/>
            <person name="Elias J.E."/>
            <person name="Goswami T."/>
            <person name="Rad R."/>
            <person name="Beausoleil S.A."/>
            <person name="Villen J."/>
            <person name="Haas W."/>
            <person name="Sowa M.E."/>
            <person name="Gygi S.P."/>
        </authorList>
    </citation>
    <scope>PHOSPHORYLATION [LARGE SCALE ANALYSIS] AT SER-178 AND SER-393</scope>
    <scope>IDENTIFICATION BY MASS SPECTROMETRY [LARGE SCALE ANALYSIS]</scope>
    <source>
        <tissue>Brain</tissue>
        <tissue>Heart</tissue>
        <tissue>Kidney</tissue>
        <tissue>Lung</tissue>
        <tissue>Pancreas</tissue>
        <tissue>Spleen</tissue>
        <tissue>Testis</tissue>
    </source>
</reference>
<name>PPIL4_MOUSE</name>
<dbReference type="EC" id="5.2.1.8"/>
<dbReference type="EMBL" id="AK011443">
    <property type="protein sequence ID" value="BAB27623.1"/>
    <property type="molecule type" value="mRNA"/>
</dbReference>
<dbReference type="EMBL" id="AK014406">
    <property type="protein sequence ID" value="BAB29330.1"/>
    <property type="molecule type" value="mRNA"/>
</dbReference>
<dbReference type="EMBL" id="AK167258">
    <property type="protein sequence ID" value="BAE39374.1"/>
    <property type="molecule type" value="mRNA"/>
</dbReference>
<dbReference type="EMBL" id="BC079912">
    <property type="protein sequence ID" value="AAH79912.1"/>
    <property type="molecule type" value="mRNA"/>
</dbReference>
<dbReference type="CCDS" id="CCDS23690.1"/>
<dbReference type="RefSeq" id="NP_080417.2">
    <property type="nucleotide sequence ID" value="NM_026141.4"/>
</dbReference>
<dbReference type="SMR" id="Q9CXG3"/>
<dbReference type="BioGRID" id="212173">
    <property type="interactions" value="3"/>
</dbReference>
<dbReference type="FunCoup" id="Q9CXG3">
    <property type="interactions" value="5767"/>
</dbReference>
<dbReference type="STRING" id="10090.ENSMUSP00000015901"/>
<dbReference type="GlyGen" id="Q9CXG3">
    <property type="glycosylation" value="1 site, 1 O-linked glycan (1 site)"/>
</dbReference>
<dbReference type="iPTMnet" id="Q9CXG3"/>
<dbReference type="PhosphoSitePlus" id="Q9CXG3"/>
<dbReference type="jPOST" id="Q9CXG3"/>
<dbReference type="PaxDb" id="10090-ENSMUSP00000015901"/>
<dbReference type="PeptideAtlas" id="Q9CXG3"/>
<dbReference type="ProteomicsDB" id="289379"/>
<dbReference type="Pumba" id="Q9CXG3"/>
<dbReference type="Antibodypedia" id="33270">
    <property type="antibodies" value="184 antibodies from 27 providers"/>
</dbReference>
<dbReference type="DNASU" id="67418"/>
<dbReference type="Ensembl" id="ENSMUST00000015901.11">
    <property type="protein sequence ID" value="ENSMUSP00000015901.5"/>
    <property type="gene ID" value="ENSMUSG00000015757.11"/>
</dbReference>
<dbReference type="GeneID" id="67418"/>
<dbReference type="KEGG" id="mmu:67418"/>
<dbReference type="UCSC" id="uc007eip.2">
    <property type="organism name" value="mouse"/>
</dbReference>
<dbReference type="AGR" id="MGI:1914668"/>
<dbReference type="CTD" id="85313"/>
<dbReference type="MGI" id="MGI:1914668">
    <property type="gene designation" value="Ppil4"/>
</dbReference>
<dbReference type="VEuPathDB" id="HostDB:ENSMUSG00000015757"/>
<dbReference type="eggNOG" id="KOG0415">
    <property type="taxonomic scope" value="Eukaryota"/>
</dbReference>
<dbReference type="GeneTree" id="ENSGT00940000156283"/>
<dbReference type="HOGENOM" id="CLU_018791_3_2_1"/>
<dbReference type="InParanoid" id="Q9CXG3"/>
<dbReference type="OMA" id="APKCCEN"/>
<dbReference type="OrthoDB" id="2083at2759"/>
<dbReference type="PhylomeDB" id="Q9CXG3"/>
<dbReference type="TreeFam" id="TF351865"/>
<dbReference type="Reactome" id="R-MMU-72163">
    <property type="pathway name" value="mRNA Splicing - Major Pathway"/>
</dbReference>
<dbReference type="BioGRID-ORCS" id="67418">
    <property type="hits" value="28 hits in 78 CRISPR screens"/>
</dbReference>
<dbReference type="ChiTaRS" id="Ppil4">
    <property type="organism name" value="mouse"/>
</dbReference>
<dbReference type="PRO" id="PR:Q9CXG3"/>
<dbReference type="Proteomes" id="UP000000589">
    <property type="component" value="Chromosome 10"/>
</dbReference>
<dbReference type="RNAct" id="Q9CXG3">
    <property type="molecule type" value="protein"/>
</dbReference>
<dbReference type="Bgee" id="ENSMUSG00000015757">
    <property type="expression patterns" value="Expressed in saccule of membranous labyrinth and 260 other cell types or tissues"/>
</dbReference>
<dbReference type="ExpressionAtlas" id="Q9CXG3">
    <property type="expression patterns" value="baseline and differential"/>
</dbReference>
<dbReference type="GO" id="GO:0005829">
    <property type="term" value="C:cytosol"/>
    <property type="evidence" value="ECO:0007669"/>
    <property type="project" value="Ensembl"/>
</dbReference>
<dbReference type="GO" id="GO:0005654">
    <property type="term" value="C:nucleoplasm"/>
    <property type="evidence" value="ECO:0007669"/>
    <property type="project" value="Ensembl"/>
</dbReference>
<dbReference type="GO" id="GO:0003755">
    <property type="term" value="F:peptidyl-prolyl cis-trans isomerase activity"/>
    <property type="evidence" value="ECO:0007669"/>
    <property type="project" value="UniProtKB-KW"/>
</dbReference>
<dbReference type="GO" id="GO:0003723">
    <property type="term" value="F:RNA binding"/>
    <property type="evidence" value="ECO:0007669"/>
    <property type="project" value="UniProtKB-KW"/>
</dbReference>
<dbReference type="CDD" id="cd01921">
    <property type="entry name" value="cyclophilin_RRM"/>
    <property type="match status" value="1"/>
</dbReference>
<dbReference type="CDD" id="cd12235">
    <property type="entry name" value="RRM_PPIL4"/>
    <property type="match status" value="1"/>
</dbReference>
<dbReference type="FunFam" id="2.40.100.10:FF:000016">
    <property type="entry name" value="Peptidyl-prolyl cis-trans isomerase"/>
    <property type="match status" value="1"/>
</dbReference>
<dbReference type="FunFam" id="3.30.70.330:FF:000267">
    <property type="entry name" value="Peptidyl-prolyl cis-trans isomerase"/>
    <property type="match status" value="1"/>
</dbReference>
<dbReference type="Gene3D" id="3.30.70.330">
    <property type="match status" value="1"/>
</dbReference>
<dbReference type="Gene3D" id="2.40.100.10">
    <property type="entry name" value="Cyclophilin-like"/>
    <property type="match status" value="1"/>
</dbReference>
<dbReference type="InterPro" id="IPR035542">
    <property type="entry name" value="CRIP"/>
</dbReference>
<dbReference type="InterPro" id="IPR029000">
    <property type="entry name" value="Cyclophilin-like_dom_sf"/>
</dbReference>
<dbReference type="InterPro" id="IPR002130">
    <property type="entry name" value="Cyclophilin-type_PPIase_dom"/>
</dbReference>
<dbReference type="InterPro" id="IPR035538">
    <property type="entry name" value="Cyclophilin_PPIL4"/>
</dbReference>
<dbReference type="InterPro" id="IPR012677">
    <property type="entry name" value="Nucleotide-bd_a/b_plait_sf"/>
</dbReference>
<dbReference type="InterPro" id="IPR035979">
    <property type="entry name" value="RBD_domain_sf"/>
</dbReference>
<dbReference type="InterPro" id="IPR000504">
    <property type="entry name" value="RRM_dom"/>
</dbReference>
<dbReference type="PANTHER" id="PTHR45843">
    <property type="entry name" value="PEPTIDYL-PROLYL CIS-TRANS ISOMERASE-LIKE 4"/>
    <property type="match status" value="1"/>
</dbReference>
<dbReference type="PANTHER" id="PTHR45843:SF1">
    <property type="entry name" value="PEPTIDYL-PROLYL CIS-TRANS ISOMERASE-LIKE 4"/>
    <property type="match status" value="1"/>
</dbReference>
<dbReference type="Pfam" id="PF00160">
    <property type="entry name" value="Pro_isomerase"/>
    <property type="match status" value="1"/>
</dbReference>
<dbReference type="Pfam" id="PF00076">
    <property type="entry name" value="RRM_1"/>
    <property type="match status" value="1"/>
</dbReference>
<dbReference type="PRINTS" id="PR00153">
    <property type="entry name" value="CSAPPISMRASE"/>
</dbReference>
<dbReference type="SMART" id="SM00360">
    <property type="entry name" value="RRM"/>
    <property type="match status" value="1"/>
</dbReference>
<dbReference type="SUPFAM" id="SSF50891">
    <property type="entry name" value="Cyclophilin-like"/>
    <property type="match status" value="1"/>
</dbReference>
<dbReference type="SUPFAM" id="SSF54928">
    <property type="entry name" value="RNA-binding domain, RBD"/>
    <property type="match status" value="1"/>
</dbReference>
<dbReference type="PROSITE" id="PS50072">
    <property type="entry name" value="CSA_PPIASE_2"/>
    <property type="match status" value="1"/>
</dbReference>
<dbReference type="PROSITE" id="PS50102">
    <property type="entry name" value="RRM"/>
    <property type="match status" value="1"/>
</dbReference>
<accession>Q9CXG3</accession>
<accession>Q3TJX1</accession>
<accession>Q68FC7</accession>
<accession>Q9CT22</accession>
<comment type="function">
    <text evidence="1">PPIases accelerate the folding of proteins. It catalyzes the cis-trans isomerization of proline imidic peptide bonds in oligopeptides (By similarity).</text>
</comment>
<comment type="catalytic activity">
    <reaction>
        <text>[protein]-peptidylproline (omega=180) = [protein]-peptidylproline (omega=0)</text>
        <dbReference type="Rhea" id="RHEA:16237"/>
        <dbReference type="Rhea" id="RHEA-COMP:10747"/>
        <dbReference type="Rhea" id="RHEA-COMP:10748"/>
        <dbReference type="ChEBI" id="CHEBI:83833"/>
        <dbReference type="ChEBI" id="CHEBI:83834"/>
        <dbReference type="EC" id="5.2.1.8"/>
    </reaction>
</comment>
<comment type="subcellular location">
    <subcellularLocation>
        <location evidence="1">Nucleus</location>
    </subcellularLocation>
</comment>
<comment type="similarity">
    <text evidence="6">Belongs to the cyclophilin-type PPIase family. PPIL4 subfamily.</text>
</comment>
<proteinExistence type="evidence at protein level"/>